<comment type="function">
    <text evidence="1">Specifically methylates the cytosine at position 1962 (m5C1962) of 23S rRNA.</text>
</comment>
<comment type="catalytic activity">
    <reaction evidence="1">
        <text>cytidine(1962) in 23S rRNA + S-adenosyl-L-methionine = 5-methylcytidine(1962) in 23S rRNA + S-adenosyl-L-homocysteine + H(+)</text>
        <dbReference type="Rhea" id="RHEA:42912"/>
        <dbReference type="Rhea" id="RHEA-COMP:10382"/>
        <dbReference type="Rhea" id="RHEA-COMP:10386"/>
        <dbReference type="ChEBI" id="CHEBI:15378"/>
        <dbReference type="ChEBI" id="CHEBI:57856"/>
        <dbReference type="ChEBI" id="CHEBI:59789"/>
        <dbReference type="ChEBI" id="CHEBI:74483"/>
        <dbReference type="ChEBI" id="CHEBI:82748"/>
        <dbReference type="EC" id="2.1.1.191"/>
    </reaction>
</comment>
<comment type="subcellular location">
    <subcellularLocation>
        <location evidence="1">Cytoplasm</location>
    </subcellularLocation>
</comment>
<comment type="similarity">
    <text evidence="1">Belongs to the methyltransferase superfamily. RlmI family.</text>
</comment>
<evidence type="ECO:0000255" key="1">
    <source>
        <dbReference type="HAMAP-Rule" id="MF_01857"/>
    </source>
</evidence>
<name>RLMI_SHESA</name>
<reference key="1">
    <citation type="submission" date="2006-09" db="EMBL/GenBank/DDBJ databases">
        <title>Complete sequence of chromosome 1 of Shewanella sp. ANA-3.</title>
        <authorList>
            <person name="Copeland A."/>
            <person name="Lucas S."/>
            <person name="Lapidus A."/>
            <person name="Barry K."/>
            <person name="Detter J.C."/>
            <person name="Glavina del Rio T."/>
            <person name="Hammon N."/>
            <person name="Israni S."/>
            <person name="Dalin E."/>
            <person name="Tice H."/>
            <person name="Pitluck S."/>
            <person name="Chertkov O."/>
            <person name="Brettin T."/>
            <person name="Bruce D."/>
            <person name="Han C."/>
            <person name="Tapia R."/>
            <person name="Gilna P."/>
            <person name="Schmutz J."/>
            <person name="Larimer F."/>
            <person name="Land M."/>
            <person name="Hauser L."/>
            <person name="Kyrpides N."/>
            <person name="Kim E."/>
            <person name="Newman D."/>
            <person name="Salticov C."/>
            <person name="Konstantinidis K."/>
            <person name="Klappenback J."/>
            <person name="Tiedje J."/>
            <person name="Richardson P."/>
        </authorList>
    </citation>
    <scope>NUCLEOTIDE SEQUENCE [LARGE SCALE GENOMIC DNA]</scope>
    <source>
        <strain>ANA-3</strain>
    </source>
</reference>
<gene>
    <name evidence="1" type="primary">rlmI</name>
    <name type="ordered locus">Shewana3_0977</name>
</gene>
<protein>
    <recommendedName>
        <fullName evidence="1">Ribosomal RNA large subunit methyltransferase I</fullName>
        <ecNumber evidence="1">2.1.1.191</ecNumber>
    </recommendedName>
    <alternativeName>
        <fullName evidence="1">23S rRNA m5C1962 methyltransferase</fullName>
    </alternativeName>
    <alternativeName>
        <fullName evidence="1">rRNA (cytosine-C(5)-)-methyltransferase RlmI</fullName>
    </alternativeName>
</protein>
<proteinExistence type="inferred from homology"/>
<organism>
    <name type="scientific">Shewanella sp. (strain ANA-3)</name>
    <dbReference type="NCBI Taxonomy" id="94122"/>
    <lineage>
        <taxon>Bacteria</taxon>
        <taxon>Pseudomonadati</taxon>
        <taxon>Pseudomonadota</taxon>
        <taxon>Gammaproteobacteria</taxon>
        <taxon>Alteromonadales</taxon>
        <taxon>Shewanellaceae</taxon>
        <taxon>Shewanella</taxon>
    </lineage>
</organism>
<feature type="chain" id="PRO_0000366262" description="Ribosomal RNA large subunit methyltransferase I">
    <location>
        <begin position="1"/>
        <end position="396"/>
    </location>
</feature>
<feature type="domain" description="PUA" evidence="1">
    <location>
        <begin position="2"/>
        <end position="79"/>
    </location>
</feature>
<accession>A0KTU3</accession>
<sequence>MAVRIKLKPGREKSLERRHPWVFSNGIHNVKGKPEAGETVDVVAHDGHWLGRGAWSPESQIQVRIWTFDREEEIDREFFKRRILRAQAGRDDLIREQGLTGYRLIAAESDGLPGITIDKYANVLVCQLLSMGADVWRDTIVDVLAELYPDCAIYERSDVDSRKKEGLASTMGLLHGTLPEMPVIIEENGIKIAVDVTKGHKTGFYLDQRDNRAMAARFVKGKSVLNCFCYTGTFGLYAANAGAASIENVDVSALALDTARLNMRVNGLNDDNVHYNEADVFKLLRQYRDEGKTFDVIVLDPPKFADNKSQLNGACRGYKDINMIALQLLNPGGVLLTFSCSGLMPADLFQKIVADAALDAKREIQFIERLSQASDHPIGSAFPEGFYLKGLVARVW</sequence>
<dbReference type="EC" id="2.1.1.191" evidence="1"/>
<dbReference type="EMBL" id="CP000469">
    <property type="protein sequence ID" value="ABK47212.1"/>
    <property type="molecule type" value="Genomic_DNA"/>
</dbReference>
<dbReference type="RefSeq" id="WP_011716103.1">
    <property type="nucleotide sequence ID" value="NC_008577.1"/>
</dbReference>
<dbReference type="SMR" id="A0KTU3"/>
<dbReference type="KEGG" id="shn:Shewana3_0977"/>
<dbReference type="eggNOG" id="COG1092">
    <property type="taxonomic scope" value="Bacteria"/>
</dbReference>
<dbReference type="HOGENOM" id="CLU_014042_0_0_6"/>
<dbReference type="OrthoDB" id="9805492at2"/>
<dbReference type="Proteomes" id="UP000002589">
    <property type="component" value="Chromosome"/>
</dbReference>
<dbReference type="GO" id="GO:0005737">
    <property type="term" value="C:cytoplasm"/>
    <property type="evidence" value="ECO:0007669"/>
    <property type="project" value="UniProtKB-SubCell"/>
</dbReference>
<dbReference type="GO" id="GO:0003723">
    <property type="term" value="F:RNA binding"/>
    <property type="evidence" value="ECO:0007669"/>
    <property type="project" value="UniProtKB-KW"/>
</dbReference>
<dbReference type="GO" id="GO:0016434">
    <property type="term" value="F:rRNA (cytosine) methyltransferase activity"/>
    <property type="evidence" value="ECO:0007669"/>
    <property type="project" value="UniProtKB-UniRule"/>
</dbReference>
<dbReference type="CDD" id="cd02440">
    <property type="entry name" value="AdoMet_MTases"/>
    <property type="match status" value="1"/>
</dbReference>
<dbReference type="CDD" id="cd21153">
    <property type="entry name" value="PUA_RlmI"/>
    <property type="match status" value="1"/>
</dbReference>
<dbReference type="CDD" id="cd11572">
    <property type="entry name" value="RlmI_M_like"/>
    <property type="match status" value="1"/>
</dbReference>
<dbReference type="Gene3D" id="2.30.130.10">
    <property type="entry name" value="PUA domain"/>
    <property type="match status" value="1"/>
</dbReference>
<dbReference type="Gene3D" id="3.30.750.80">
    <property type="entry name" value="RNA methyltransferase domain (HRMD) like"/>
    <property type="match status" value="1"/>
</dbReference>
<dbReference type="Gene3D" id="3.40.50.150">
    <property type="entry name" value="Vaccinia Virus protein VP39"/>
    <property type="match status" value="1"/>
</dbReference>
<dbReference type="HAMAP" id="MF_01857">
    <property type="entry name" value="23SrRNA_methyltr_I"/>
    <property type="match status" value="1"/>
</dbReference>
<dbReference type="InterPro" id="IPR002478">
    <property type="entry name" value="PUA"/>
</dbReference>
<dbReference type="InterPro" id="IPR015947">
    <property type="entry name" value="PUA-like_sf"/>
</dbReference>
<dbReference type="InterPro" id="IPR036974">
    <property type="entry name" value="PUA_sf"/>
</dbReference>
<dbReference type="InterPro" id="IPR023542">
    <property type="entry name" value="RLMI"/>
</dbReference>
<dbReference type="InterPro" id="IPR041532">
    <property type="entry name" value="RlmI-like_PUA"/>
</dbReference>
<dbReference type="InterPro" id="IPR019614">
    <property type="entry name" value="SAM-dep_methyl-trfase"/>
</dbReference>
<dbReference type="InterPro" id="IPR029063">
    <property type="entry name" value="SAM-dependent_MTases_sf"/>
</dbReference>
<dbReference type="PANTHER" id="PTHR42873">
    <property type="entry name" value="RIBOSOMAL RNA LARGE SUBUNIT METHYLTRANSFERASE"/>
    <property type="match status" value="1"/>
</dbReference>
<dbReference type="PANTHER" id="PTHR42873:SF1">
    <property type="entry name" value="S-ADENOSYLMETHIONINE-DEPENDENT METHYLTRANSFERASE DOMAIN-CONTAINING PROTEIN"/>
    <property type="match status" value="1"/>
</dbReference>
<dbReference type="Pfam" id="PF10672">
    <property type="entry name" value="Methyltrans_SAM"/>
    <property type="match status" value="1"/>
</dbReference>
<dbReference type="Pfam" id="PF17785">
    <property type="entry name" value="PUA_3"/>
    <property type="match status" value="1"/>
</dbReference>
<dbReference type="SMART" id="SM00359">
    <property type="entry name" value="PUA"/>
    <property type="match status" value="1"/>
</dbReference>
<dbReference type="SUPFAM" id="SSF88697">
    <property type="entry name" value="PUA domain-like"/>
    <property type="match status" value="1"/>
</dbReference>
<dbReference type="SUPFAM" id="SSF53335">
    <property type="entry name" value="S-adenosyl-L-methionine-dependent methyltransferases"/>
    <property type="match status" value="1"/>
</dbReference>
<dbReference type="PROSITE" id="PS50890">
    <property type="entry name" value="PUA"/>
    <property type="match status" value="1"/>
</dbReference>
<keyword id="KW-0963">Cytoplasm</keyword>
<keyword id="KW-0489">Methyltransferase</keyword>
<keyword id="KW-0694">RNA-binding</keyword>
<keyword id="KW-0698">rRNA processing</keyword>
<keyword id="KW-0949">S-adenosyl-L-methionine</keyword>
<keyword id="KW-0808">Transferase</keyword>